<accession>Q7CPE2</accession>
<evidence type="ECO:0000255" key="1">
    <source>
        <dbReference type="HAMAP-Rule" id="MF_01347"/>
    </source>
</evidence>
<sequence>MATGKIVQVIGAVVDVEFPQDAVPRVYDALEVQNGNEKLVLEVQQQLGGGIVRTIAMGSSDGLRRGLDVKDLEHPIEVPVGKATLGRIMNVLGEPVDMKGEIGEEERWAIHRAAPSYEELSNSQELLETGIKVIDLMCPFAKGGKVGLFGGAGVGKTVNMMELIRNIAIEHSGYSVFAGVGERTREGNDFYHEMTDSNVIDKVSLVYGQMNEPPGNRLRVALTGLTMAEKFRDEGRDVLLFVDNIYRYTLAGTEVSALLGRMPSAVGYQPTLAEEMGVLQERITSTKTGSITSVQAVYVPADDLTDPSPATTFAHLDATVVLSRQIASLGIYPAVDPLDSTSRQLDPLVVGQEHYDTARGVQSILQRYQELKDIIAILGMDELSEEDKLVVARARKIQRFLSQPFFVAEVFTGSPGKYVSLKDTIRGFKGIMEGEYDHLPEQAFYMVGSIDEAVEKAKKL</sequence>
<protein>
    <recommendedName>
        <fullName evidence="1">ATP synthase subunit beta</fullName>
        <ecNumber evidence="1">7.1.2.2</ecNumber>
    </recommendedName>
    <alternativeName>
        <fullName evidence="1">ATP synthase F1 sector subunit beta</fullName>
    </alternativeName>
    <alternativeName>
        <fullName evidence="1">F-ATPase subunit beta</fullName>
    </alternativeName>
</protein>
<organism>
    <name type="scientific">Salmonella typhimurium (strain LT2 / SGSC1412 / ATCC 700720)</name>
    <dbReference type="NCBI Taxonomy" id="99287"/>
    <lineage>
        <taxon>Bacteria</taxon>
        <taxon>Pseudomonadati</taxon>
        <taxon>Pseudomonadota</taxon>
        <taxon>Gammaproteobacteria</taxon>
        <taxon>Enterobacterales</taxon>
        <taxon>Enterobacteriaceae</taxon>
        <taxon>Salmonella</taxon>
    </lineage>
</organism>
<name>ATPB_SALTY</name>
<feature type="chain" id="PRO_0000254372" description="ATP synthase subunit beta">
    <location>
        <begin position="1"/>
        <end position="460"/>
    </location>
</feature>
<feature type="binding site" evidence="1">
    <location>
        <begin position="150"/>
        <end position="157"/>
    </location>
    <ligand>
        <name>ATP</name>
        <dbReference type="ChEBI" id="CHEBI:30616"/>
    </ligand>
</feature>
<comment type="function">
    <text evidence="1">Produces ATP from ADP in the presence of a proton gradient across the membrane. The catalytic sites are hosted primarily by the beta subunits.</text>
</comment>
<comment type="catalytic activity">
    <reaction evidence="1">
        <text>ATP + H2O + 4 H(+)(in) = ADP + phosphate + 5 H(+)(out)</text>
        <dbReference type="Rhea" id="RHEA:57720"/>
        <dbReference type="ChEBI" id="CHEBI:15377"/>
        <dbReference type="ChEBI" id="CHEBI:15378"/>
        <dbReference type="ChEBI" id="CHEBI:30616"/>
        <dbReference type="ChEBI" id="CHEBI:43474"/>
        <dbReference type="ChEBI" id="CHEBI:456216"/>
        <dbReference type="EC" id="7.1.2.2"/>
    </reaction>
</comment>
<comment type="subunit">
    <text evidence="1">F-type ATPases have 2 components, CF(1) - the catalytic core - and CF(0) - the membrane proton channel. CF(1) has five subunits: alpha(3), beta(3), gamma(1), delta(1), epsilon(1). CF(0) has three main subunits: a(1), b(2) and c(9-12). The alpha and beta chains form an alternating ring which encloses part of the gamma chain. CF(1) is attached to CF(0) by a central stalk formed by the gamma and epsilon chains, while a peripheral stalk is formed by the delta and b chains.</text>
</comment>
<comment type="subcellular location">
    <subcellularLocation>
        <location evidence="1">Cell inner membrane</location>
        <topology evidence="1">Peripheral membrane protein</topology>
    </subcellularLocation>
</comment>
<comment type="similarity">
    <text evidence="1">Belongs to the ATPase alpha/beta chains family.</text>
</comment>
<gene>
    <name evidence="1" type="primary">atpD</name>
    <name type="ordered locus">STM3865</name>
</gene>
<reference key="1">
    <citation type="journal article" date="2001" name="Nature">
        <title>Complete genome sequence of Salmonella enterica serovar Typhimurium LT2.</title>
        <authorList>
            <person name="McClelland M."/>
            <person name="Sanderson K.E."/>
            <person name="Spieth J."/>
            <person name="Clifton S.W."/>
            <person name="Latreille P."/>
            <person name="Courtney L."/>
            <person name="Porwollik S."/>
            <person name="Ali J."/>
            <person name="Dante M."/>
            <person name="Du F."/>
            <person name="Hou S."/>
            <person name="Layman D."/>
            <person name="Leonard S."/>
            <person name="Nguyen C."/>
            <person name="Scott K."/>
            <person name="Holmes A."/>
            <person name="Grewal N."/>
            <person name="Mulvaney E."/>
            <person name="Ryan E."/>
            <person name="Sun H."/>
            <person name="Florea L."/>
            <person name="Miller W."/>
            <person name="Stoneking T."/>
            <person name="Nhan M."/>
            <person name="Waterston R."/>
            <person name="Wilson R.K."/>
        </authorList>
    </citation>
    <scope>NUCLEOTIDE SEQUENCE [LARGE SCALE GENOMIC DNA]</scope>
    <source>
        <strain>LT2 / SGSC1412 / ATCC 700720</strain>
    </source>
</reference>
<keyword id="KW-0066">ATP synthesis</keyword>
<keyword id="KW-0067">ATP-binding</keyword>
<keyword id="KW-0997">Cell inner membrane</keyword>
<keyword id="KW-1003">Cell membrane</keyword>
<keyword id="KW-0139">CF(1)</keyword>
<keyword id="KW-0375">Hydrogen ion transport</keyword>
<keyword id="KW-0406">Ion transport</keyword>
<keyword id="KW-0472">Membrane</keyword>
<keyword id="KW-0547">Nucleotide-binding</keyword>
<keyword id="KW-1185">Reference proteome</keyword>
<keyword id="KW-1278">Translocase</keyword>
<keyword id="KW-0813">Transport</keyword>
<proteinExistence type="inferred from homology"/>
<dbReference type="EC" id="7.1.2.2" evidence="1"/>
<dbReference type="EMBL" id="AE006468">
    <property type="protein sequence ID" value="AAL22723.1"/>
    <property type="molecule type" value="Genomic_DNA"/>
</dbReference>
<dbReference type="RefSeq" id="NP_462764.1">
    <property type="nucleotide sequence ID" value="NC_003197.2"/>
</dbReference>
<dbReference type="RefSeq" id="WP_000190499.1">
    <property type="nucleotide sequence ID" value="NC_003197.2"/>
</dbReference>
<dbReference type="SMR" id="Q7CPE2"/>
<dbReference type="STRING" id="99287.STM3865"/>
<dbReference type="PaxDb" id="99287-STM3865"/>
<dbReference type="GeneID" id="1255392"/>
<dbReference type="GeneID" id="66758154"/>
<dbReference type="KEGG" id="stm:STM3865"/>
<dbReference type="PATRIC" id="fig|99287.12.peg.4094"/>
<dbReference type="HOGENOM" id="CLU_022398_0_2_6"/>
<dbReference type="OMA" id="SMEEGGW"/>
<dbReference type="PhylomeDB" id="Q7CPE2"/>
<dbReference type="BioCyc" id="SENT99287:STM3865-MONOMER"/>
<dbReference type="Proteomes" id="UP000001014">
    <property type="component" value="Chromosome"/>
</dbReference>
<dbReference type="GO" id="GO:0005886">
    <property type="term" value="C:plasma membrane"/>
    <property type="evidence" value="ECO:0007669"/>
    <property type="project" value="UniProtKB-SubCell"/>
</dbReference>
<dbReference type="GO" id="GO:0045259">
    <property type="term" value="C:proton-transporting ATP synthase complex"/>
    <property type="evidence" value="ECO:0007669"/>
    <property type="project" value="UniProtKB-KW"/>
</dbReference>
<dbReference type="GO" id="GO:0005524">
    <property type="term" value="F:ATP binding"/>
    <property type="evidence" value="ECO:0007669"/>
    <property type="project" value="UniProtKB-UniRule"/>
</dbReference>
<dbReference type="GO" id="GO:0016887">
    <property type="term" value="F:ATP hydrolysis activity"/>
    <property type="evidence" value="ECO:0007669"/>
    <property type="project" value="InterPro"/>
</dbReference>
<dbReference type="GO" id="GO:0046933">
    <property type="term" value="F:proton-transporting ATP synthase activity, rotational mechanism"/>
    <property type="evidence" value="ECO:0007669"/>
    <property type="project" value="UniProtKB-UniRule"/>
</dbReference>
<dbReference type="CDD" id="cd18110">
    <property type="entry name" value="ATP-synt_F1_beta_C"/>
    <property type="match status" value="1"/>
</dbReference>
<dbReference type="CDD" id="cd18115">
    <property type="entry name" value="ATP-synt_F1_beta_N"/>
    <property type="match status" value="1"/>
</dbReference>
<dbReference type="CDD" id="cd01133">
    <property type="entry name" value="F1-ATPase_beta_CD"/>
    <property type="match status" value="1"/>
</dbReference>
<dbReference type="FunFam" id="1.10.1140.10:FF:000001">
    <property type="entry name" value="ATP synthase subunit beta"/>
    <property type="match status" value="1"/>
</dbReference>
<dbReference type="FunFam" id="2.40.10.170:FF:000003">
    <property type="entry name" value="ATP synthase subunit beta"/>
    <property type="match status" value="1"/>
</dbReference>
<dbReference type="FunFam" id="3.40.50.300:FF:000004">
    <property type="entry name" value="ATP synthase subunit beta"/>
    <property type="match status" value="1"/>
</dbReference>
<dbReference type="Gene3D" id="2.40.10.170">
    <property type="match status" value="1"/>
</dbReference>
<dbReference type="Gene3D" id="1.10.1140.10">
    <property type="entry name" value="Bovine Mitochondrial F1-atpase, Atp Synthase Beta Chain, Chain D, domain 3"/>
    <property type="match status" value="1"/>
</dbReference>
<dbReference type="Gene3D" id="3.40.50.300">
    <property type="entry name" value="P-loop containing nucleotide triphosphate hydrolases"/>
    <property type="match status" value="1"/>
</dbReference>
<dbReference type="HAMAP" id="MF_01347">
    <property type="entry name" value="ATP_synth_beta_bact"/>
    <property type="match status" value="1"/>
</dbReference>
<dbReference type="InterPro" id="IPR003593">
    <property type="entry name" value="AAA+_ATPase"/>
</dbReference>
<dbReference type="InterPro" id="IPR055190">
    <property type="entry name" value="ATP-synt_VA_C"/>
</dbReference>
<dbReference type="InterPro" id="IPR005722">
    <property type="entry name" value="ATP_synth_F1_bsu"/>
</dbReference>
<dbReference type="InterPro" id="IPR020003">
    <property type="entry name" value="ATPase_a/bsu_AS"/>
</dbReference>
<dbReference type="InterPro" id="IPR050053">
    <property type="entry name" value="ATPase_alpha/beta_chains"/>
</dbReference>
<dbReference type="InterPro" id="IPR004100">
    <property type="entry name" value="ATPase_F1/V1/A1_a/bsu_N"/>
</dbReference>
<dbReference type="InterPro" id="IPR036121">
    <property type="entry name" value="ATPase_F1/V1/A1_a/bsu_N_sf"/>
</dbReference>
<dbReference type="InterPro" id="IPR000194">
    <property type="entry name" value="ATPase_F1/V1/A1_a/bsu_nucl-bd"/>
</dbReference>
<dbReference type="InterPro" id="IPR024034">
    <property type="entry name" value="ATPase_F1/V1_b/a_C"/>
</dbReference>
<dbReference type="InterPro" id="IPR027417">
    <property type="entry name" value="P-loop_NTPase"/>
</dbReference>
<dbReference type="NCBIfam" id="TIGR01039">
    <property type="entry name" value="atpD"/>
    <property type="match status" value="1"/>
</dbReference>
<dbReference type="PANTHER" id="PTHR15184">
    <property type="entry name" value="ATP SYNTHASE"/>
    <property type="match status" value="1"/>
</dbReference>
<dbReference type="PANTHER" id="PTHR15184:SF71">
    <property type="entry name" value="ATP SYNTHASE SUBUNIT BETA, MITOCHONDRIAL"/>
    <property type="match status" value="1"/>
</dbReference>
<dbReference type="Pfam" id="PF00006">
    <property type="entry name" value="ATP-synt_ab"/>
    <property type="match status" value="1"/>
</dbReference>
<dbReference type="Pfam" id="PF02874">
    <property type="entry name" value="ATP-synt_ab_N"/>
    <property type="match status" value="1"/>
</dbReference>
<dbReference type="Pfam" id="PF22919">
    <property type="entry name" value="ATP-synt_VA_C"/>
    <property type="match status" value="1"/>
</dbReference>
<dbReference type="SMART" id="SM00382">
    <property type="entry name" value="AAA"/>
    <property type="match status" value="1"/>
</dbReference>
<dbReference type="SUPFAM" id="SSF47917">
    <property type="entry name" value="C-terminal domain of alpha and beta subunits of F1 ATP synthase"/>
    <property type="match status" value="1"/>
</dbReference>
<dbReference type="SUPFAM" id="SSF50615">
    <property type="entry name" value="N-terminal domain of alpha and beta subunits of F1 ATP synthase"/>
    <property type="match status" value="1"/>
</dbReference>
<dbReference type="SUPFAM" id="SSF52540">
    <property type="entry name" value="P-loop containing nucleoside triphosphate hydrolases"/>
    <property type="match status" value="1"/>
</dbReference>
<dbReference type="PROSITE" id="PS00152">
    <property type="entry name" value="ATPASE_ALPHA_BETA"/>
    <property type="match status" value="1"/>
</dbReference>